<sequence length="29" mass="2916">GLPICGETCVGGTCNTPGCSCSWPVCTRN</sequence>
<organism>
    <name type="scientific">Viola odorata</name>
    <name type="common">Sweet violet</name>
    <dbReference type="NCBI Taxonomy" id="97441"/>
    <lineage>
        <taxon>Eukaryota</taxon>
        <taxon>Viridiplantae</taxon>
        <taxon>Streptophyta</taxon>
        <taxon>Embryophyta</taxon>
        <taxon>Tracheophyta</taxon>
        <taxon>Spermatophyta</taxon>
        <taxon>Magnoliopsida</taxon>
        <taxon>eudicotyledons</taxon>
        <taxon>Gunneridae</taxon>
        <taxon>Pentapetalae</taxon>
        <taxon>rosids</taxon>
        <taxon>fabids</taxon>
        <taxon>Malpighiales</taxon>
        <taxon>Violaceae</taxon>
        <taxon>Viola</taxon>
        <taxon>Viola subgen. Viola</taxon>
        <taxon>Viola sect. Viola</taxon>
        <taxon>Viola subsect. Viola</taxon>
    </lineage>
</organism>
<reference key="1">
    <citation type="journal article" date="1999" name="J. Mol. Biol.">
        <title>Plant cyclotides: a unique family of cyclic and knotted proteins that defines the cyclic cystine knot structural motif.</title>
        <authorList>
            <person name="Craik D.J."/>
            <person name="Daly N.L."/>
            <person name="Bond T."/>
            <person name="Waine C."/>
        </authorList>
    </citation>
    <scope>PROTEIN SEQUENCE</scope>
</reference>
<reference key="2">
    <citation type="journal article" date="2006" name="Biochem. J.">
        <title>A novel suite of cyclotides from Viola odorata: sequence variation and the implications for structure, function and stability.</title>
        <authorList>
            <person name="Ireland D.C."/>
            <person name="Colgrave M.L."/>
            <person name="Craik D.J."/>
        </authorList>
    </citation>
    <scope>PROTEIN SEQUENCE</scope>
    <scope>MASS SPECTROMETRY</scope>
</reference>
<evidence type="ECO:0000255" key="1">
    <source>
        <dbReference type="PROSITE-ProRule" id="PRU00395"/>
    </source>
</evidence>
<evidence type="ECO:0000269" key="2">
    <source>
    </source>
</evidence>
<evidence type="ECO:0000305" key="3"/>
<proteinExistence type="evidence at protein level"/>
<name>CYO12_VIOOD</name>
<dbReference type="SMR" id="P83836"/>
<dbReference type="GO" id="GO:0006952">
    <property type="term" value="P:defense response"/>
    <property type="evidence" value="ECO:0000250"/>
    <property type="project" value="UniProtKB"/>
</dbReference>
<dbReference type="InterPro" id="IPR005535">
    <property type="entry name" value="Cyclotide"/>
</dbReference>
<dbReference type="InterPro" id="IPR012324">
    <property type="entry name" value="Cyclotide_moebius_CS"/>
</dbReference>
<dbReference type="InterPro" id="IPR036146">
    <property type="entry name" value="Cyclotide_sf"/>
</dbReference>
<dbReference type="Pfam" id="PF03784">
    <property type="entry name" value="Cyclotide"/>
    <property type="match status" value="1"/>
</dbReference>
<dbReference type="PIRSF" id="PIRSF037891">
    <property type="entry name" value="Cycloviolacin"/>
    <property type="match status" value="1"/>
</dbReference>
<dbReference type="SUPFAM" id="SSF57038">
    <property type="entry name" value="Cyclotides"/>
    <property type="match status" value="1"/>
</dbReference>
<dbReference type="PROSITE" id="PS51052">
    <property type="entry name" value="CYCLOTIDE"/>
    <property type="match status" value="1"/>
</dbReference>
<dbReference type="PROSITE" id="PS60009">
    <property type="entry name" value="CYCLOTIDE_MOEBIUS"/>
    <property type="match status" value="1"/>
</dbReference>
<comment type="function">
    <text>Probably participates in a plant defense mechanism.</text>
</comment>
<comment type="domain">
    <text>The presence of a 'disulfide through disulfide knot' structurally defines this protein as a knottin.</text>
</comment>
<comment type="PTM">
    <text>This is a cyclic peptide.</text>
</comment>
<comment type="mass spectrometry" mass="2890.2" method="MALDI" evidence="2"/>
<comment type="similarity">
    <text evidence="1">Belongs to the cyclotide family. Moebius subfamily.</text>
</comment>
<comment type="caution">
    <text evidence="3">This peptide is cyclic. The start position was chosen by similarity to OAK1 (kalata-B1) for which the DNA sequence is known.</text>
</comment>
<accession>P83836</accession>
<accession>P58444</accession>
<accession>P58450</accession>
<keyword id="KW-0903">Direct protein sequencing</keyword>
<keyword id="KW-1015">Disulfide bond</keyword>
<keyword id="KW-0960">Knottin</keyword>
<keyword id="KW-0611">Plant defense</keyword>
<protein>
    <recommendedName>
        <fullName>Cycloviolacin-O12</fullName>
    </recommendedName>
</protein>
<feature type="peptide" id="PRO_0000043619" description="Cycloviolacin-O12">
    <location>
        <begin position="1"/>
        <end position="29"/>
    </location>
</feature>
<feature type="disulfide bond">
    <location>
        <begin position="5"/>
        <end position="19"/>
    </location>
</feature>
<feature type="disulfide bond">
    <location>
        <begin position="9"/>
        <end position="21"/>
    </location>
</feature>
<feature type="disulfide bond">
    <location>
        <begin position="14"/>
        <end position="26"/>
    </location>
</feature>
<feature type="cross-link" description="Cyclopeptide (Gly-Asn)">
    <location>
        <begin position="1"/>
        <end position="29"/>
    </location>
</feature>